<gene>
    <name type="ORF">2a</name>
</gene>
<proteinExistence type="evidence at protein level"/>
<feature type="chain" id="PRO_0000106060" description="Non-structural protein 2a">
    <location>
        <begin position="1"/>
        <end position="261"/>
    </location>
</feature>
<feature type="strand" evidence="3">
    <location>
        <begin position="9"/>
        <end position="14"/>
    </location>
</feature>
<feature type="helix" evidence="3">
    <location>
        <begin position="19"/>
        <end position="34"/>
    </location>
</feature>
<feature type="strand" evidence="3">
    <location>
        <begin position="38"/>
        <end position="41"/>
    </location>
</feature>
<feature type="strand" evidence="3">
    <location>
        <begin position="46"/>
        <end position="53"/>
    </location>
</feature>
<feature type="helix" evidence="3">
    <location>
        <begin position="59"/>
        <end position="70"/>
    </location>
</feature>
<feature type="helix" evidence="3">
    <location>
        <begin position="71"/>
        <end position="76"/>
    </location>
</feature>
<feature type="strand" evidence="3">
    <location>
        <begin position="78"/>
        <end position="88"/>
    </location>
</feature>
<feature type="strand" evidence="3">
    <location>
        <begin position="91"/>
        <end position="98"/>
    </location>
</feature>
<feature type="helix" evidence="3">
    <location>
        <begin position="100"/>
        <end position="112"/>
    </location>
</feature>
<feature type="strand" evidence="3">
    <location>
        <begin position="116"/>
        <end position="118"/>
    </location>
</feature>
<feature type="strand" evidence="3">
    <location>
        <begin position="126"/>
        <end position="135"/>
    </location>
</feature>
<feature type="strand" evidence="3">
    <location>
        <begin position="144"/>
        <end position="149"/>
    </location>
</feature>
<feature type="strand" evidence="3">
    <location>
        <begin position="163"/>
        <end position="166"/>
    </location>
</feature>
<protein>
    <recommendedName>
        <fullName>Non-structural protein 2a</fullName>
        <shortName>ns2a</shortName>
    </recommendedName>
    <alternativeName>
        <fullName>30 kDa accessory protein</fullName>
    </alternativeName>
    <alternativeName>
        <fullName>30 kDa non-structural protein</fullName>
    </alternativeName>
    <alternativeName>
        <fullName>ns2</fullName>
    </alternativeName>
    <alternativeName>
        <fullName>p30</fullName>
    </alternativeName>
</protein>
<accession>P19738</accession>
<reference key="1">
    <citation type="journal article" date="1988" name="Virology">
        <title>Sequence of mouse hepatitis virus A59 mRNA 2: indications for RNA recombination between coronaviruses and influenza C virus.</title>
        <authorList>
            <person name="Luytjes W."/>
            <person name="Bredenbeek P.J."/>
            <person name="Noten A.F.H."/>
            <person name="Horzinek M.C."/>
            <person name="Spaan W.J.M."/>
        </authorList>
    </citation>
    <scope>NUCLEOTIDE SEQUENCE [GENOMIC RNA]</scope>
</reference>
<reference key="2">
    <citation type="journal article" date="1997" name="Virology">
        <title>Altered pathogenesis of a mutant of the murine coronavirus MHV-A59 is associated with a Q159L amino acid substitution in the spike protein.</title>
        <authorList>
            <person name="Leparc-Goffart I."/>
            <person name="Hingley S.T."/>
            <person name="Chua M.M."/>
            <person name="Jiang X."/>
            <person name="Lavi E."/>
            <person name="Weiss S.R."/>
        </authorList>
    </citation>
    <scope>NUCLEOTIDE SEQUENCE [GENOMIC RNA]</scope>
    <source>
        <strain>Isolate C12 mutant</strain>
    </source>
</reference>
<keyword id="KW-0002">3D-structure</keyword>
<keyword id="KW-1035">Host cytoplasm</keyword>
<keyword id="KW-1185">Reference proteome</keyword>
<evidence type="ECO:0000250" key="1"/>
<evidence type="ECO:0000305" key="2"/>
<evidence type="ECO:0007829" key="3">
    <source>
        <dbReference type="PDB" id="4Z5V"/>
    </source>
</evidence>
<sequence length="261" mass="30393">MAFADKPNHFINFPLAQFSGFMGKYLKLQSQLVEMGLDCKLQKAPHVSITLLDIKADQYKQVEFAIQEIIDDLAAYEGDIVFDNPHMLGRCLVLDVRGFEELHEDIVEILRRRGCTADQSRHWIPHCTVAQFDEERETKGMQFYHKEPFYLKHNNLLTDAGLELVKIGSSKIDGFYCSELSVWCGERLCYKPPTPKFSDIFGYCCIDKIRGDLEIGDLPQDDEEAWAELSYHYQRNTYFFRHVHDNSIYFRTVCRMKGCMC</sequence>
<dbReference type="EMBL" id="M23256">
    <property type="protein sequence ID" value="AAA46450.1"/>
    <property type="molecule type" value="Genomic_RNA"/>
</dbReference>
<dbReference type="EMBL" id="AF029248">
    <property type="status" value="NOT_ANNOTATED_CDS"/>
    <property type="molecule type" value="Genomic_RNA"/>
</dbReference>
<dbReference type="PIR" id="A31165">
    <property type="entry name" value="MNIHMH"/>
</dbReference>
<dbReference type="PDB" id="4Z5V">
    <property type="method" value="X-ray"/>
    <property type="resolution" value="3.05 A"/>
    <property type="chains" value="A/B=2-199"/>
</dbReference>
<dbReference type="PDBsum" id="4Z5V"/>
<dbReference type="SMR" id="P19738"/>
<dbReference type="Proteomes" id="UP000007192">
    <property type="component" value="Segment"/>
</dbReference>
<dbReference type="GO" id="GO:0030430">
    <property type="term" value="C:host cell cytoplasm"/>
    <property type="evidence" value="ECO:0007669"/>
    <property type="project" value="UniProtKB-SubCell"/>
</dbReference>
<dbReference type="Gene3D" id="3.90.1140.10">
    <property type="entry name" value="Cyclic phosphodiesterase"/>
    <property type="match status" value="1"/>
</dbReference>
<dbReference type="InterPro" id="IPR007878">
    <property type="entry name" value="Coronavirus_NS2A"/>
</dbReference>
<dbReference type="InterPro" id="IPR039573">
    <property type="entry name" value="NS2A-like"/>
</dbReference>
<dbReference type="Pfam" id="PF05213">
    <property type="entry name" value="Corona_NS2A"/>
    <property type="match status" value="1"/>
</dbReference>
<dbReference type="PIRSF" id="PIRSF003890">
    <property type="entry name" value="LigT_coronavirus"/>
    <property type="match status" value="1"/>
</dbReference>
<organismHost>
    <name type="scientific">Mus musculus</name>
    <name type="common">Mouse</name>
    <dbReference type="NCBI Taxonomy" id="10090"/>
</organismHost>
<organism>
    <name type="scientific">Murine coronavirus (strain A59)</name>
    <name type="common">MHV-A59</name>
    <name type="synonym">Murine hepatitis virus</name>
    <dbReference type="NCBI Taxonomy" id="11142"/>
    <lineage>
        <taxon>Viruses</taxon>
        <taxon>Riboviria</taxon>
        <taxon>Orthornavirae</taxon>
        <taxon>Pisuviricota</taxon>
        <taxon>Pisoniviricetes</taxon>
        <taxon>Nidovirales</taxon>
        <taxon>Cornidovirineae</taxon>
        <taxon>Coronaviridae</taxon>
        <taxon>Orthocoronavirinae</taxon>
        <taxon>Betacoronavirus</taxon>
        <taxon>Embecovirus</taxon>
        <taxon>Murine coronavirus</taxon>
    </lineage>
</organism>
<name>NS2A_CVMA5</name>
<comment type="function">
    <text>Not essential for virus replication in transformed murine cells.</text>
</comment>
<comment type="subcellular location">
    <subcellularLocation>
        <location evidence="1">Host cytoplasm</location>
    </subcellularLocation>
</comment>
<comment type="similarity">
    <text evidence="2">Belongs to the coronaviruses ns2a protein family.</text>
</comment>